<proteinExistence type="inferred from homology"/>
<comment type="function">
    <text evidence="2">With S4 and S5 plays an important role in translational accuracy.</text>
</comment>
<comment type="function">
    <text evidence="2">Interacts with and stabilizes bases of the 16S rRNA that are involved in tRNA selection in the A site and with the mRNA backbone. Located at the interface of the 30S and 50S subunits, it traverses the body of the 30S subunit contacting proteins on the other side and probably holding the rRNA structure together. The combined cluster of proteins S8, S12 and S17 appears to hold together the shoulder and platform of the 30S subunit.</text>
</comment>
<comment type="subunit">
    <text evidence="2">Part of the 30S ribosomal subunit. Contacts proteins S8 and S17. May interact with IF1 in the 30S initiation complex.</text>
</comment>
<comment type="similarity">
    <text evidence="2">Belongs to the universal ribosomal protein uS12 family.</text>
</comment>
<sequence length="124" mass="13814">MATINQLVNNPRKRSVVKSKVPALKACPQRRGVCTRVYTTTPKKPNSALRKVARVRLTSRFEVTSYIGGEGHNLQEHSVVLIRGGRVKDLPGVRYHIVRGALDTSGVNNRKHGRSKYGTKRPKS</sequence>
<reference key="1">
    <citation type="journal article" date="2006" name="J. Bacteriol.">
        <title>Chromosome rearrangement and diversification of Francisella tularensis revealed by the type B (OSU18) genome sequence.</title>
        <authorList>
            <person name="Petrosino J.F."/>
            <person name="Xiang Q."/>
            <person name="Karpathy S.E."/>
            <person name="Jiang H."/>
            <person name="Yerrapragada S."/>
            <person name="Liu Y."/>
            <person name="Gioia J."/>
            <person name="Hemphill L."/>
            <person name="Gonzalez A."/>
            <person name="Raghavan T.M."/>
            <person name="Uzman A."/>
            <person name="Fox G.E."/>
            <person name="Highlander S."/>
            <person name="Reichard M."/>
            <person name="Morton R.J."/>
            <person name="Clinkenbeard K.D."/>
            <person name="Weinstock G.M."/>
        </authorList>
    </citation>
    <scope>NUCLEOTIDE SEQUENCE [LARGE SCALE GENOMIC DNA]</scope>
    <source>
        <strain>OSU18</strain>
    </source>
</reference>
<feature type="chain" id="PRO_0000263558" description="Small ribosomal subunit protein uS12">
    <location>
        <begin position="1"/>
        <end position="124"/>
    </location>
</feature>
<feature type="region of interest" description="Disordered" evidence="3">
    <location>
        <begin position="102"/>
        <end position="124"/>
    </location>
</feature>
<feature type="compositionally biased region" description="Basic residues" evidence="3">
    <location>
        <begin position="109"/>
        <end position="124"/>
    </location>
</feature>
<feature type="modified residue" description="3-methylthioaspartic acid" evidence="1">
    <location>
        <position position="89"/>
    </location>
</feature>
<accession>Q0BNT1</accession>
<dbReference type="EMBL" id="CP000437">
    <property type="protein sequence ID" value="ABI82253.1"/>
    <property type="molecule type" value="Genomic_DNA"/>
</dbReference>
<dbReference type="RefSeq" id="WP_003014323.1">
    <property type="nucleotide sequence ID" value="NC_017463.1"/>
</dbReference>
<dbReference type="SMR" id="Q0BNT1"/>
<dbReference type="KEGG" id="fth:FTH_0227"/>
<dbReference type="GO" id="GO:0015935">
    <property type="term" value="C:small ribosomal subunit"/>
    <property type="evidence" value="ECO:0007669"/>
    <property type="project" value="InterPro"/>
</dbReference>
<dbReference type="GO" id="GO:0019843">
    <property type="term" value="F:rRNA binding"/>
    <property type="evidence" value="ECO:0007669"/>
    <property type="project" value="UniProtKB-UniRule"/>
</dbReference>
<dbReference type="GO" id="GO:0003735">
    <property type="term" value="F:structural constituent of ribosome"/>
    <property type="evidence" value="ECO:0007669"/>
    <property type="project" value="InterPro"/>
</dbReference>
<dbReference type="GO" id="GO:0000049">
    <property type="term" value="F:tRNA binding"/>
    <property type="evidence" value="ECO:0007669"/>
    <property type="project" value="UniProtKB-UniRule"/>
</dbReference>
<dbReference type="GO" id="GO:0006412">
    <property type="term" value="P:translation"/>
    <property type="evidence" value="ECO:0007669"/>
    <property type="project" value="UniProtKB-UniRule"/>
</dbReference>
<dbReference type="CDD" id="cd03368">
    <property type="entry name" value="Ribosomal_S12"/>
    <property type="match status" value="1"/>
</dbReference>
<dbReference type="FunFam" id="2.40.50.140:FF:000001">
    <property type="entry name" value="30S ribosomal protein S12"/>
    <property type="match status" value="1"/>
</dbReference>
<dbReference type="Gene3D" id="2.40.50.140">
    <property type="entry name" value="Nucleic acid-binding proteins"/>
    <property type="match status" value="1"/>
</dbReference>
<dbReference type="HAMAP" id="MF_00403_B">
    <property type="entry name" value="Ribosomal_uS12_B"/>
    <property type="match status" value="1"/>
</dbReference>
<dbReference type="InterPro" id="IPR012340">
    <property type="entry name" value="NA-bd_OB-fold"/>
</dbReference>
<dbReference type="InterPro" id="IPR006032">
    <property type="entry name" value="Ribosomal_uS12"/>
</dbReference>
<dbReference type="InterPro" id="IPR005679">
    <property type="entry name" value="Ribosomal_uS12_bac"/>
</dbReference>
<dbReference type="NCBIfam" id="TIGR00981">
    <property type="entry name" value="rpsL_bact"/>
    <property type="match status" value="1"/>
</dbReference>
<dbReference type="PANTHER" id="PTHR11652">
    <property type="entry name" value="30S RIBOSOMAL PROTEIN S12 FAMILY MEMBER"/>
    <property type="match status" value="1"/>
</dbReference>
<dbReference type="Pfam" id="PF00164">
    <property type="entry name" value="Ribosom_S12_S23"/>
    <property type="match status" value="1"/>
</dbReference>
<dbReference type="PIRSF" id="PIRSF002133">
    <property type="entry name" value="Ribosomal_S12/S23"/>
    <property type="match status" value="1"/>
</dbReference>
<dbReference type="PRINTS" id="PR01034">
    <property type="entry name" value="RIBOSOMALS12"/>
</dbReference>
<dbReference type="SUPFAM" id="SSF50249">
    <property type="entry name" value="Nucleic acid-binding proteins"/>
    <property type="match status" value="1"/>
</dbReference>
<dbReference type="PROSITE" id="PS00055">
    <property type="entry name" value="RIBOSOMAL_S12"/>
    <property type="match status" value="1"/>
</dbReference>
<protein>
    <recommendedName>
        <fullName evidence="2">Small ribosomal subunit protein uS12</fullName>
    </recommendedName>
    <alternativeName>
        <fullName evidence="4">30S ribosomal protein S12</fullName>
    </alternativeName>
</protein>
<gene>
    <name evidence="2" type="primary">rpsL</name>
    <name type="ordered locus">FTH_0227</name>
</gene>
<name>RS12_FRATO</name>
<evidence type="ECO:0000250" key="1"/>
<evidence type="ECO:0000255" key="2">
    <source>
        <dbReference type="HAMAP-Rule" id="MF_00403"/>
    </source>
</evidence>
<evidence type="ECO:0000256" key="3">
    <source>
        <dbReference type="SAM" id="MobiDB-lite"/>
    </source>
</evidence>
<evidence type="ECO:0000305" key="4"/>
<keyword id="KW-0488">Methylation</keyword>
<keyword id="KW-0687">Ribonucleoprotein</keyword>
<keyword id="KW-0689">Ribosomal protein</keyword>
<keyword id="KW-0694">RNA-binding</keyword>
<keyword id="KW-0699">rRNA-binding</keyword>
<keyword id="KW-0820">tRNA-binding</keyword>
<organism>
    <name type="scientific">Francisella tularensis subsp. holarctica (strain OSU18)</name>
    <dbReference type="NCBI Taxonomy" id="393011"/>
    <lineage>
        <taxon>Bacteria</taxon>
        <taxon>Pseudomonadati</taxon>
        <taxon>Pseudomonadota</taxon>
        <taxon>Gammaproteobacteria</taxon>
        <taxon>Thiotrichales</taxon>
        <taxon>Francisellaceae</taxon>
        <taxon>Francisella</taxon>
    </lineage>
</organism>